<reference key="1">
    <citation type="journal article" date="2009" name="Environ. Microbiol.">
        <title>Contribution of mobile genetic elements to Desulfovibrio vulgaris genome plasticity.</title>
        <authorList>
            <person name="Walker C.B."/>
            <person name="Stolyar S."/>
            <person name="Chivian D."/>
            <person name="Pinel N."/>
            <person name="Gabster J.A."/>
            <person name="Dehal P.S."/>
            <person name="He Z."/>
            <person name="Yang Z.K."/>
            <person name="Yen H.C."/>
            <person name="Zhou J."/>
            <person name="Wall J.D."/>
            <person name="Hazen T.C."/>
            <person name="Arkin A.P."/>
            <person name="Stahl D.A."/>
        </authorList>
    </citation>
    <scope>NUCLEOTIDE SEQUENCE [LARGE SCALE GENOMIC DNA]</scope>
    <source>
        <strain>DP4</strain>
    </source>
</reference>
<organism>
    <name type="scientific">Nitratidesulfovibrio vulgaris (strain DP4)</name>
    <name type="common">Desulfovibrio vulgaris</name>
    <dbReference type="NCBI Taxonomy" id="391774"/>
    <lineage>
        <taxon>Bacteria</taxon>
        <taxon>Pseudomonadati</taxon>
        <taxon>Thermodesulfobacteriota</taxon>
        <taxon>Desulfovibrionia</taxon>
        <taxon>Desulfovibrionales</taxon>
        <taxon>Desulfovibrionaceae</taxon>
        <taxon>Nitratidesulfovibrio</taxon>
    </lineage>
</organism>
<accession>A1V9Z2</accession>
<feature type="chain" id="PRO_0000374809" description="Ribosomal protein uS12 methylthiotransferase RimO">
    <location>
        <begin position="1"/>
        <end position="430"/>
    </location>
</feature>
<feature type="domain" description="MTTase N-terminal" evidence="1">
    <location>
        <begin position="2"/>
        <end position="119"/>
    </location>
</feature>
<feature type="domain" description="Radical SAM core" evidence="2">
    <location>
        <begin position="131"/>
        <end position="361"/>
    </location>
</feature>
<feature type="domain" description="TRAM" evidence="1">
    <location>
        <begin position="364"/>
        <end position="430"/>
    </location>
</feature>
<feature type="binding site" evidence="1">
    <location>
        <position position="11"/>
    </location>
    <ligand>
        <name>[4Fe-4S] cluster</name>
        <dbReference type="ChEBI" id="CHEBI:49883"/>
        <label>1</label>
    </ligand>
</feature>
<feature type="binding site" evidence="1">
    <location>
        <position position="46"/>
    </location>
    <ligand>
        <name>[4Fe-4S] cluster</name>
        <dbReference type="ChEBI" id="CHEBI:49883"/>
        <label>1</label>
    </ligand>
</feature>
<feature type="binding site" evidence="1">
    <location>
        <position position="81"/>
    </location>
    <ligand>
        <name>[4Fe-4S] cluster</name>
        <dbReference type="ChEBI" id="CHEBI:49883"/>
        <label>1</label>
    </ligand>
</feature>
<feature type="binding site" evidence="1">
    <location>
        <position position="145"/>
    </location>
    <ligand>
        <name>[4Fe-4S] cluster</name>
        <dbReference type="ChEBI" id="CHEBI:49883"/>
        <label>2</label>
        <note>4Fe-4S-S-AdoMet</note>
    </ligand>
</feature>
<feature type="binding site" evidence="1">
    <location>
        <position position="149"/>
    </location>
    <ligand>
        <name>[4Fe-4S] cluster</name>
        <dbReference type="ChEBI" id="CHEBI:49883"/>
        <label>2</label>
        <note>4Fe-4S-S-AdoMet</note>
    </ligand>
</feature>
<feature type="binding site" evidence="1">
    <location>
        <position position="152"/>
    </location>
    <ligand>
        <name>[4Fe-4S] cluster</name>
        <dbReference type="ChEBI" id="CHEBI:49883"/>
        <label>2</label>
        <note>4Fe-4S-S-AdoMet</note>
    </ligand>
</feature>
<gene>
    <name evidence="1" type="primary">rimO</name>
    <name type="ordered locus">Dvul_0234</name>
</gene>
<dbReference type="EC" id="2.8.4.4" evidence="1"/>
<dbReference type="EMBL" id="CP000527">
    <property type="protein sequence ID" value="ABM27258.1"/>
    <property type="molecule type" value="Genomic_DNA"/>
</dbReference>
<dbReference type="RefSeq" id="WP_011791481.1">
    <property type="nucleotide sequence ID" value="NC_008751.1"/>
</dbReference>
<dbReference type="SMR" id="A1V9Z2"/>
<dbReference type="KEGG" id="dvl:Dvul_0234"/>
<dbReference type="HOGENOM" id="CLU_018697_0_1_7"/>
<dbReference type="Proteomes" id="UP000009173">
    <property type="component" value="Chromosome"/>
</dbReference>
<dbReference type="GO" id="GO:0005829">
    <property type="term" value="C:cytosol"/>
    <property type="evidence" value="ECO:0007669"/>
    <property type="project" value="TreeGrafter"/>
</dbReference>
<dbReference type="GO" id="GO:0051539">
    <property type="term" value="F:4 iron, 4 sulfur cluster binding"/>
    <property type="evidence" value="ECO:0007669"/>
    <property type="project" value="UniProtKB-UniRule"/>
</dbReference>
<dbReference type="GO" id="GO:0035599">
    <property type="term" value="F:aspartic acid methylthiotransferase activity"/>
    <property type="evidence" value="ECO:0007669"/>
    <property type="project" value="TreeGrafter"/>
</dbReference>
<dbReference type="GO" id="GO:0046872">
    <property type="term" value="F:metal ion binding"/>
    <property type="evidence" value="ECO:0007669"/>
    <property type="project" value="UniProtKB-KW"/>
</dbReference>
<dbReference type="GO" id="GO:0103039">
    <property type="term" value="F:protein methylthiotransferase activity"/>
    <property type="evidence" value="ECO:0007669"/>
    <property type="project" value="UniProtKB-EC"/>
</dbReference>
<dbReference type="GO" id="GO:0006400">
    <property type="term" value="P:tRNA modification"/>
    <property type="evidence" value="ECO:0007669"/>
    <property type="project" value="InterPro"/>
</dbReference>
<dbReference type="CDD" id="cd01335">
    <property type="entry name" value="Radical_SAM"/>
    <property type="match status" value="1"/>
</dbReference>
<dbReference type="FunFam" id="3.80.30.20:FF:000001">
    <property type="entry name" value="tRNA-2-methylthio-N(6)-dimethylallyladenosine synthase 2"/>
    <property type="match status" value="1"/>
</dbReference>
<dbReference type="Gene3D" id="3.40.50.12160">
    <property type="entry name" value="Methylthiotransferase, N-terminal domain"/>
    <property type="match status" value="1"/>
</dbReference>
<dbReference type="Gene3D" id="2.40.50.140">
    <property type="entry name" value="Nucleic acid-binding proteins"/>
    <property type="match status" value="1"/>
</dbReference>
<dbReference type="Gene3D" id="3.80.30.20">
    <property type="entry name" value="tm_1862 like domain"/>
    <property type="match status" value="1"/>
</dbReference>
<dbReference type="HAMAP" id="MF_01865">
    <property type="entry name" value="MTTase_RimO"/>
    <property type="match status" value="1"/>
</dbReference>
<dbReference type="InterPro" id="IPR006638">
    <property type="entry name" value="Elp3/MiaA/NifB-like_rSAM"/>
</dbReference>
<dbReference type="InterPro" id="IPR005839">
    <property type="entry name" value="Methylthiotransferase"/>
</dbReference>
<dbReference type="InterPro" id="IPR020612">
    <property type="entry name" value="Methylthiotransferase_CS"/>
</dbReference>
<dbReference type="InterPro" id="IPR013848">
    <property type="entry name" value="Methylthiotransferase_N"/>
</dbReference>
<dbReference type="InterPro" id="IPR038135">
    <property type="entry name" value="Methylthiotransferase_N_sf"/>
</dbReference>
<dbReference type="InterPro" id="IPR012340">
    <property type="entry name" value="NA-bd_OB-fold"/>
</dbReference>
<dbReference type="InterPro" id="IPR005840">
    <property type="entry name" value="Ribosomal_uS12_MeSTrfase_RimO"/>
</dbReference>
<dbReference type="InterPro" id="IPR007197">
    <property type="entry name" value="rSAM"/>
</dbReference>
<dbReference type="InterPro" id="IPR023404">
    <property type="entry name" value="rSAM_horseshoe"/>
</dbReference>
<dbReference type="InterPro" id="IPR002792">
    <property type="entry name" value="TRAM_dom"/>
</dbReference>
<dbReference type="NCBIfam" id="TIGR01125">
    <property type="entry name" value="30S ribosomal protein S12 methylthiotransferase RimO"/>
    <property type="match status" value="1"/>
</dbReference>
<dbReference type="NCBIfam" id="TIGR00089">
    <property type="entry name" value="MiaB/RimO family radical SAM methylthiotransferase"/>
    <property type="match status" value="1"/>
</dbReference>
<dbReference type="PANTHER" id="PTHR43837">
    <property type="entry name" value="RIBOSOMAL PROTEIN S12 METHYLTHIOTRANSFERASE RIMO"/>
    <property type="match status" value="1"/>
</dbReference>
<dbReference type="PANTHER" id="PTHR43837:SF1">
    <property type="entry name" value="RIBOSOMAL PROTEIN US12 METHYLTHIOTRANSFERASE RIMO"/>
    <property type="match status" value="1"/>
</dbReference>
<dbReference type="Pfam" id="PF04055">
    <property type="entry name" value="Radical_SAM"/>
    <property type="match status" value="1"/>
</dbReference>
<dbReference type="Pfam" id="PF18693">
    <property type="entry name" value="TRAM_2"/>
    <property type="match status" value="1"/>
</dbReference>
<dbReference type="Pfam" id="PF00919">
    <property type="entry name" value="UPF0004"/>
    <property type="match status" value="1"/>
</dbReference>
<dbReference type="SFLD" id="SFLDG01082">
    <property type="entry name" value="B12-binding_domain_containing"/>
    <property type="match status" value="1"/>
</dbReference>
<dbReference type="SFLD" id="SFLDS00029">
    <property type="entry name" value="Radical_SAM"/>
    <property type="match status" value="1"/>
</dbReference>
<dbReference type="SFLD" id="SFLDF00274">
    <property type="entry name" value="ribosomal_protein_S12_methylth"/>
    <property type="match status" value="1"/>
</dbReference>
<dbReference type="SMART" id="SM00729">
    <property type="entry name" value="Elp3"/>
    <property type="match status" value="1"/>
</dbReference>
<dbReference type="SUPFAM" id="SSF102114">
    <property type="entry name" value="Radical SAM enzymes"/>
    <property type="match status" value="1"/>
</dbReference>
<dbReference type="PROSITE" id="PS51449">
    <property type="entry name" value="MTTASE_N"/>
    <property type="match status" value="1"/>
</dbReference>
<dbReference type="PROSITE" id="PS01278">
    <property type="entry name" value="MTTASE_RADICAL"/>
    <property type="match status" value="1"/>
</dbReference>
<dbReference type="PROSITE" id="PS51918">
    <property type="entry name" value="RADICAL_SAM"/>
    <property type="match status" value="1"/>
</dbReference>
<dbReference type="PROSITE" id="PS50926">
    <property type="entry name" value="TRAM"/>
    <property type="match status" value="1"/>
</dbReference>
<comment type="function">
    <text evidence="1">Catalyzes the methylthiolation of an aspartic acid residue of ribosomal protein uS12.</text>
</comment>
<comment type="catalytic activity">
    <reaction evidence="1">
        <text>L-aspartate(89)-[ribosomal protein uS12]-hydrogen + (sulfur carrier)-SH + AH2 + 2 S-adenosyl-L-methionine = 3-methylsulfanyl-L-aspartate(89)-[ribosomal protein uS12]-hydrogen + (sulfur carrier)-H + 5'-deoxyadenosine + L-methionine + A + S-adenosyl-L-homocysteine + 2 H(+)</text>
        <dbReference type="Rhea" id="RHEA:37087"/>
        <dbReference type="Rhea" id="RHEA-COMP:10460"/>
        <dbReference type="Rhea" id="RHEA-COMP:10461"/>
        <dbReference type="Rhea" id="RHEA-COMP:14737"/>
        <dbReference type="Rhea" id="RHEA-COMP:14739"/>
        <dbReference type="ChEBI" id="CHEBI:13193"/>
        <dbReference type="ChEBI" id="CHEBI:15378"/>
        <dbReference type="ChEBI" id="CHEBI:17319"/>
        <dbReference type="ChEBI" id="CHEBI:17499"/>
        <dbReference type="ChEBI" id="CHEBI:29917"/>
        <dbReference type="ChEBI" id="CHEBI:29961"/>
        <dbReference type="ChEBI" id="CHEBI:57844"/>
        <dbReference type="ChEBI" id="CHEBI:57856"/>
        <dbReference type="ChEBI" id="CHEBI:59789"/>
        <dbReference type="ChEBI" id="CHEBI:64428"/>
        <dbReference type="ChEBI" id="CHEBI:73599"/>
        <dbReference type="EC" id="2.8.4.4"/>
    </reaction>
</comment>
<comment type="cofactor">
    <cofactor evidence="1">
        <name>[4Fe-4S] cluster</name>
        <dbReference type="ChEBI" id="CHEBI:49883"/>
    </cofactor>
    <text evidence="1">Binds 2 [4Fe-4S] clusters. One cluster is coordinated with 3 cysteines and an exchangeable S-adenosyl-L-methionine.</text>
</comment>
<comment type="subcellular location">
    <subcellularLocation>
        <location evidence="1">Cytoplasm</location>
    </subcellularLocation>
</comment>
<comment type="similarity">
    <text evidence="1">Belongs to the methylthiotransferase family. RimO subfamily.</text>
</comment>
<keyword id="KW-0004">4Fe-4S</keyword>
<keyword id="KW-0963">Cytoplasm</keyword>
<keyword id="KW-0408">Iron</keyword>
<keyword id="KW-0411">Iron-sulfur</keyword>
<keyword id="KW-0479">Metal-binding</keyword>
<keyword id="KW-0949">S-adenosyl-L-methionine</keyword>
<keyword id="KW-0808">Transferase</keyword>
<evidence type="ECO:0000255" key="1">
    <source>
        <dbReference type="HAMAP-Rule" id="MF_01865"/>
    </source>
</evidence>
<evidence type="ECO:0000255" key="2">
    <source>
        <dbReference type="PROSITE-ProRule" id="PRU01266"/>
    </source>
</evidence>
<protein>
    <recommendedName>
        <fullName evidence="1">Ribosomal protein uS12 methylthiotransferase RimO</fullName>
        <shortName evidence="1">uS12 MTTase</shortName>
        <shortName evidence="1">uS12 methylthiotransferase</shortName>
        <ecNumber evidence="1">2.8.4.4</ecNumber>
    </recommendedName>
    <alternativeName>
        <fullName evidence="1">Ribosomal protein uS12 (aspartate-C(3))-methylthiotransferase</fullName>
    </alternativeName>
    <alternativeName>
        <fullName evidence="1">Ribosome maturation factor RimO</fullName>
    </alternativeName>
</protein>
<sequence length="430" mass="47305">MISVYSISLGCPKNRVDTEHLLGSLGVAVQPVEHLSRADVVLINTCGFILPAVEESVRTIVETIDDLSGLRKRPLLAVAGCLVGRYGAKELASELPEVDVWLPNQDITAWPAMLAHALKLEGAVTPGRLLSTGPSYAWLKISDGCRHNCSFCTIPSIRGGHRSTPADVLEREARDLVAQGVRELVLVAQDVTAWGEDIGAPHGLATLLERLLPVPGLARLRLMYLYPAGLTRELLGFMRDAGAPLVPYFDVPLQHAHPDILSRMGRPFARDPRRVVERVRDFFPDAALRTSLIVGFPGETDEHYAALTSFVEETRFTHMGVFAYRAEEGTPAAEMPEQVEDRVKEWRRDALMEVQAEISEELLAVHEGTRQQVLVDAPHEEWPGLHTGRTWFQAPEIDGITYVSGPGVEPGALVEADIVETRTYDLVALV</sequence>
<proteinExistence type="inferred from homology"/>
<name>RIMO_NITV4</name>